<organism>
    <name type="scientific">Berne virus</name>
    <name type="common">BEV</name>
    <dbReference type="NCBI Taxonomy" id="11156"/>
    <lineage>
        <taxon>Viruses</taxon>
        <taxon>Riboviria</taxon>
        <taxon>Orthornavirae</taxon>
        <taxon>Pisuviricota</taxon>
        <taxon>Pisoniviricetes</taxon>
        <taxon>Nidovirales</taxon>
        <taxon>Tornidovirineae</taxon>
        <taxon>Tobaniviridae</taxon>
        <taxon>Torovirinae</taxon>
        <taxon>Torovirus</taxon>
        <taxon>Renitovirus</taxon>
        <taxon>Equine torovirus</taxon>
    </lineage>
</organism>
<organismHost>
    <name type="scientific">Equus caballus</name>
    <name type="common">Horse</name>
    <dbReference type="NCBI Taxonomy" id="9796"/>
</organismHost>
<dbReference type="EMBL" id="X52506">
    <property type="protein sequence ID" value="CAA36748.1"/>
    <property type="molecule type" value="mRNA"/>
</dbReference>
<dbReference type="PIR" id="A36759">
    <property type="entry name" value="VGWJBV"/>
</dbReference>
<dbReference type="GlyCosmos" id="P23052">
    <property type="glycosylation" value="17 sites, No reported glycans"/>
</dbReference>
<dbReference type="Proteomes" id="UP000006571">
    <property type="component" value="Genome"/>
</dbReference>
<dbReference type="GO" id="GO:0016020">
    <property type="term" value="C:membrane"/>
    <property type="evidence" value="ECO:0007669"/>
    <property type="project" value="UniProtKB-KW"/>
</dbReference>
<dbReference type="GO" id="GO:0019031">
    <property type="term" value="C:viral envelope"/>
    <property type="evidence" value="ECO:0007669"/>
    <property type="project" value="UniProtKB-KW"/>
</dbReference>
<dbReference type="GO" id="GO:0055036">
    <property type="term" value="C:virion membrane"/>
    <property type="evidence" value="ECO:0007669"/>
    <property type="project" value="UniProtKB-SubCell"/>
</dbReference>
<dbReference type="GO" id="GO:0039663">
    <property type="term" value="P:membrane fusion involved in viral entry into host cell"/>
    <property type="evidence" value="ECO:0007669"/>
    <property type="project" value="UniProtKB-KW"/>
</dbReference>
<dbReference type="GO" id="GO:0046718">
    <property type="term" value="P:symbiont entry into host cell"/>
    <property type="evidence" value="ECO:0007669"/>
    <property type="project" value="UniProtKB-KW"/>
</dbReference>
<dbReference type="GO" id="GO:0019062">
    <property type="term" value="P:virion attachment to host cell"/>
    <property type="evidence" value="ECO:0007669"/>
    <property type="project" value="UniProtKB-KW"/>
</dbReference>
<dbReference type="InterPro" id="IPR031412">
    <property type="entry name" value="S_torovirinae"/>
</dbReference>
<dbReference type="Pfam" id="PF17072">
    <property type="entry name" value="Spike_torovirin"/>
    <property type="match status" value="1"/>
</dbReference>
<protein>
    <recommendedName>
        <fullName>Spike glycoprotein</fullName>
        <shortName>S glycoprotein</shortName>
    </recommendedName>
    <alternativeName>
        <fullName>E2</fullName>
    </alternativeName>
    <alternativeName>
        <fullName>Peplomer protein</fullName>
    </alternativeName>
</protein>
<comment type="function">
    <text evidence="1">Mediates the binding of virions to the host cell receptor and is involved in membrane fusion.</text>
</comment>
<comment type="subunit">
    <text evidence="1">Homotrimer.</text>
</comment>
<comment type="subcellular location">
    <subcellularLocation>
        <location evidence="1">Virion membrane</location>
        <topology evidence="1">Single-pass type I membrane protein</topology>
    </subcellularLocation>
</comment>
<comment type="similarity">
    <text evidence="3">Belongs to the toroviruses spike protein family.</text>
</comment>
<name>SPIKE_BEV</name>
<accession>P23052</accession>
<gene>
    <name type="primary">S</name>
    <name type="synonym">P</name>
</gene>
<feature type="signal peptide" evidence="2">
    <location>
        <begin position="1"/>
        <end position="20"/>
    </location>
</feature>
<feature type="chain" id="PRO_0000037434" description="Spike glycoprotein">
    <location>
        <begin position="21"/>
        <end position="1581"/>
    </location>
</feature>
<feature type="topological domain" description="Virion surface" evidence="2">
    <location>
        <begin position="21"/>
        <end position="1551"/>
    </location>
</feature>
<feature type="transmembrane region" description="Helical" evidence="2">
    <location>
        <begin position="1552"/>
        <end position="1572"/>
    </location>
</feature>
<feature type="topological domain" description="Intravirion" evidence="2">
    <location>
        <begin position="1573"/>
        <end position="1581"/>
    </location>
</feature>
<feature type="glycosylation site" description="N-linked (GlcNAc...) asparagine; by host" evidence="2">
    <location>
        <position position="25"/>
    </location>
</feature>
<feature type="glycosylation site" description="N-linked (GlcNAc...) asparagine; by host" evidence="2">
    <location>
        <position position="384"/>
    </location>
</feature>
<feature type="glycosylation site" description="N-linked (GlcNAc...) asparagine; by host" evidence="2">
    <location>
        <position position="494"/>
    </location>
</feature>
<feature type="glycosylation site" description="N-linked (GlcNAc...) asparagine; by host" evidence="2">
    <location>
        <position position="574"/>
    </location>
</feature>
<feature type="glycosylation site" description="N-linked (GlcNAc...) asparagine; by host" evidence="2">
    <location>
        <position position="935"/>
    </location>
</feature>
<feature type="glycosylation site" description="N-linked (GlcNAc...) asparagine; by host" evidence="2">
    <location>
        <position position="969"/>
    </location>
</feature>
<feature type="glycosylation site" description="N-linked (GlcNAc...) asparagine; by host" evidence="2">
    <location>
        <position position="1267"/>
    </location>
</feature>
<feature type="glycosylation site" description="N-linked (GlcNAc...) asparagine; by host" evidence="2">
    <location>
        <position position="1297"/>
    </location>
</feature>
<feature type="glycosylation site" description="N-linked (GlcNAc...) asparagine; by host" evidence="2">
    <location>
        <position position="1385"/>
    </location>
</feature>
<feature type="glycosylation site" description="N-linked (GlcNAc...) asparagine; by host" evidence="2">
    <location>
        <position position="1389"/>
    </location>
</feature>
<feature type="glycosylation site" description="N-linked (GlcNAc...) asparagine; by host" evidence="2">
    <location>
        <position position="1428"/>
    </location>
</feature>
<feature type="glycosylation site" description="N-linked (GlcNAc...) asparagine; by host" evidence="2">
    <location>
        <position position="1431"/>
    </location>
</feature>
<feature type="glycosylation site" description="N-linked (GlcNAc...) asparagine; by host" evidence="2">
    <location>
        <position position="1438"/>
    </location>
</feature>
<feature type="glycosylation site" description="N-linked (GlcNAc...) asparagine; by host" evidence="2">
    <location>
        <position position="1483"/>
    </location>
</feature>
<feature type="glycosylation site" description="N-linked (GlcNAc...) asparagine; by host" evidence="2">
    <location>
        <position position="1487"/>
    </location>
</feature>
<feature type="glycosylation site" description="N-linked (GlcNAc...) asparagine; by host" evidence="2">
    <location>
        <position position="1495"/>
    </location>
</feature>
<feature type="glycosylation site" description="N-linked (GlcNAc...) asparagine; by host" evidence="2">
    <location>
        <position position="1515"/>
    </location>
</feature>
<reference key="1">
    <citation type="journal article" date="1990" name="Virology">
        <title>Primary structure and post-translational processing of the Berne virus peplomer protein.</title>
        <authorList>
            <person name="Snijder E.J."/>
            <person name="den Boon J.A."/>
            <person name="Spaan W.J.M."/>
            <person name="Weiss M."/>
            <person name="Horzinek M.C."/>
        </authorList>
    </citation>
    <scope>NUCLEOTIDE SEQUENCE [MRNA]</scope>
    <source>
        <strain>Isolate P138/72</strain>
    </source>
</reference>
<sequence>MFLCFCAATVLCFWINSGGADVVPNGTLIFSEPVPYPFSLDVLRSFSQHVVLRNKRAVTTISWSYSYQITTSSLSVNSWYVTFTAPLGWNYYTGQSFGTVLNQNAMMRASQSTFTYDVISYVGQRPNLDCQVNSLVNGGLDGWYSTVRVDNCFNAPCHVGGRPGCSIGLPYMSNGVCTRVLSTTQSPGLQYEIYSGQQFAVYQITPYTQYTITMPSGILGYCQQTPLYVDCGTWTPFRVHSYGCDKVTQNCKYTLTSNWVVAFQNKATAVILPSELIVPVAQKVTRRLGVNTPDYFWLVKQAYHYLSQANLSPNYALFSALCNSLYQQSATLSTLCFGSPFFVAQECYNNALYLPDAVFTTLFSTLFSWDYQINYPLNQVLTQNETFLQLPATNYQGQTLSQGRMLNLFKDAIVFLDFFDTKFYRTNDAPSSDIFVVVARQAQLIRYGNFRIEQINGYFQVKCSSNIISTLEPHPAGVIMIARHHSMWSVAARNSTSFYCVTHSLTTFGKLDISTSWFFHTLALPSGPVSQVSMPLLSTAAVGVYMHPMIEHWIPLLTLAQSQYQPSFFNIGINKTITLTTQLQAYAQVYTAWFLSVIYVRLPEARRLTLGVQLVPFIQALLSIKQADLDATDVDSVARYNVLSLMWGRKYAVVNYNQLPEWTYPLFKGEIGESMWFRKKIMPTTEGCQTSAHFSSITGYLQFSDYVYIPKYNKVSCPISTLAPSVLQVYEVQSLFVILIQCVSGSYDWYPGLSGGTAFVYKSYKLGTVCVLLPSDVLSTGPNIGFYSGTALSIVTVQTTNDVLPNCIGLVQDNIFTPCHPSGCPVRNSYDNYIVCFDSSTYTFKNYHRTTPPVMNVPIQEVPLQMEIPTVILQSYELKHTESVLLQDIEGGIIVDHNTGSIWYPDGQAYDVSFYVSVIIRYAPPKLELPSTLANFTSCLDYICFGNYQCRTEAQTFCTSMDYFEQVFNKSLISLKTALQDLHYVLKLVLPETTLELTELTRRRRRAVYEFDDTISLLSESFERFMSPASQAYMANMLWWDDAFDGFSLPQRTGSILSRSPSLSSVSSWNSYTSRTPLISNVKTPKTTFNVKLSMPKLPKASTLSKIGSVLSSGLSIASLGLSIFSIVEDRRVTELTQQQIMALEDQITILTDYTEKNFKEIQSSLNTLGQQVQDFSQQVTMSLQQLSNGLEQITQQLDKSIYYVTATQQYATYMSSLINHLTELAAAVYKTQDMYVTCIHSLQSGVLSPNCITPSQIFQLYQVARNLSGQCQPIFSEREVSRFYSLPLVTDAMVHNDTYWFSWSIPITCSNIQGSVYKVQPGYIVNPTHPTSLQYDLPSHVVTSNAGALRFDDHYCDRYNQVYLCTKSAFDLQPSNYLTMLYSNISENVSLTFHPEPRPDPCVYLSSSALYCYYSDQCNQCVVAVGNCSNQTVTYRNYTYPIMDPQCRGFDQITISSPIDIGVDFTALPSRPPLPLHLSYVNVTFNVTIPHGLNWTDLVLDYSFKDKIYEISKNITDLHQQILQVSSWASGWFQRIRDFLYNLLPTWITWLTLGFSLFSIVISGINIILFFEMNGKVKKS</sequence>
<proteinExistence type="evidence at transcript level"/>
<keyword id="KW-1168">Fusion of virus membrane with host membrane</keyword>
<keyword id="KW-0325">Glycoprotein</keyword>
<keyword id="KW-0945">Host-virus interaction</keyword>
<keyword id="KW-0472">Membrane</keyword>
<keyword id="KW-0732">Signal</keyword>
<keyword id="KW-0812">Transmembrane</keyword>
<keyword id="KW-1133">Transmembrane helix</keyword>
<keyword id="KW-1161">Viral attachment to host cell</keyword>
<keyword id="KW-0261">Viral envelope protein</keyword>
<keyword id="KW-1162">Viral penetration into host cytoplasm</keyword>
<keyword id="KW-0946">Virion</keyword>
<keyword id="KW-1160">Virus entry into host cell</keyword>
<evidence type="ECO:0000250" key="1"/>
<evidence type="ECO:0000255" key="2"/>
<evidence type="ECO:0000305" key="3"/>